<protein>
    <recommendedName>
        <fullName evidence="1">Macrolide export ATP-binding/permease protein MacB</fullName>
        <ecNumber evidence="1">7.6.2.-</ecNumber>
    </recommendedName>
</protein>
<organism>
    <name type="scientific">Bartonella quintana (strain Toulouse)</name>
    <name type="common">Rochalimaea quintana</name>
    <dbReference type="NCBI Taxonomy" id="283165"/>
    <lineage>
        <taxon>Bacteria</taxon>
        <taxon>Pseudomonadati</taxon>
        <taxon>Pseudomonadota</taxon>
        <taxon>Alphaproteobacteria</taxon>
        <taxon>Hyphomicrobiales</taxon>
        <taxon>Bartonellaceae</taxon>
        <taxon>Bartonella</taxon>
    </lineage>
</organism>
<proteinExistence type="inferred from homology"/>
<dbReference type="EC" id="7.6.2.-" evidence="1"/>
<dbReference type="EMBL" id="BX897700">
    <property type="protein sequence ID" value="CAF26697.1"/>
    <property type="molecule type" value="Genomic_DNA"/>
</dbReference>
<dbReference type="RefSeq" id="WP_011179865.1">
    <property type="nucleotide sequence ID" value="NC_005955.1"/>
</dbReference>
<dbReference type="SMR" id="Q6FYL0"/>
<dbReference type="KEGG" id="bqu:BQ12380"/>
<dbReference type="eggNOG" id="COG0577">
    <property type="taxonomic scope" value="Bacteria"/>
</dbReference>
<dbReference type="eggNOG" id="COG1136">
    <property type="taxonomic scope" value="Bacteria"/>
</dbReference>
<dbReference type="HOGENOM" id="CLU_000604_78_2_5"/>
<dbReference type="OrthoDB" id="9770036at2"/>
<dbReference type="Proteomes" id="UP000000597">
    <property type="component" value="Chromosome"/>
</dbReference>
<dbReference type="GO" id="GO:0005886">
    <property type="term" value="C:plasma membrane"/>
    <property type="evidence" value="ECO:0007669"/>
    <property type="project" value="UniProtKB-SubCell"/>
</dbReference>
<dbReference type="GO" id="GO:0005524">
    <property type="term" value="F:ATP binding"/>
    <property type="evidence" value="ECO:0007669"/>
    <property type="project" value="UniProtKB-KW"/>
</dbReference>
<dbReference type="GO" id="GO:0016887">
    <property type="term" value="F:ATP hydrolysis activity"/>
    <property type="evidence" value="ECO:0007669"/>
    <property type="project" value="InterPro"/>
</dbReference>
<dbReference type="GO" id="GO:0022857">
    <property type="term" value="F:transmembrane transporter activity"/>
    <property type="evidence" value="ECO:0007669"/>
    <property type="project" value="TreeGrafter"/>
</dbReference>
<dbReference type="GO" id="GO:0046677">
    <property type="term" value="P:response to antibiotic"/>
    <property type="evidence" value="ECO:0007669"/>
    <property type="project" value="UniProtKB-KW"/>
</dbReference>
<dbReference type="CDD" id="cd03255">
    <property type="entry name" value="ABC_MJ0796_LolCDE_FtsE"/>
    <property type="match status" value="1"/>
</dbReference>
<dbReference type="FunFam" id="3.40.50.300:FF:000032">
    <property type="entry name" value="Export ABC transporter ATP-binding protein"/>
    <property type="match status" value="1"/>
</dbReference>
<dbReference type="Gene3D" id="3.40.50.300">
    <property type="entry name" value="P-loop containing nucleotide triphosphate hydrolases"/>
    <property type="match status" value="1"/>
</dbReference>
<dbReference type="InterPro" id="IPR003593">
    <property type="entry name" value="AAA+_ATPase"/>
</dbReference>
<dbReference type="InterPro" id="IPR003838">
    <property type="entry name" value="ABC3_permease_C"/>
</dbReference>
<dbReference type="InterPro" id="IPR003439">
    <property type="entry name" value="ABC_transporter-like_ATP-bd"/>
</dbReference>
<dbReference type="InterPro" id="IPR017871">
    <property type="entry name" value="ABC_transporter-like_CS"/>
</dbReference>
<dbReference type="InterPro" id="IPR017911">
    <property type="entry name" value="MacB-like_ATP-bd"/>
</dbReference>
<dbReference type="InterPro" id="IPR025857">
    <property type="entry name" value="MacB_PCD"/>
</dbReference>
<dbReference type="InterPro" id="IPR050250">
    <property type="entry name" value="Macrolide_Exporter_MacB"/>
</dbReference>
<dbReference type="InterPro" id="IPR027417">
    <property type="entry name" value="P-loop_NTPase"/>
</dbReference>
<dbReference type="PANTHER" id="PTHR30572:SF14">
    <property type="entry name" value="MACROLIDE EXPORT ATP-BINDING_PERMEASE PROTEIN MACB"/>
    <property type="match status" value="1"/>
</dbReference>
<dbReference type="PANTHER" id="PTHR30572">
    <property type="entry name" value="MEMBRANE COMPONENT OF TRANSPORTER-RELATED"/>
    <property type="match status" value="1"/>
</dbReference>
<dbReference type="Pfam" id="PF00005">
    <property type="entry name" value="ABC_tran"/>
    <property type="match status" value="1"/>
</dbReference>
<dbReference type="Pfam" id="PF02687">
    <property type="entry name" value="FtsX"/>
    <property type="match status" value="1"/>
</dbReference>
<dbReference type="Pfam" id="PF12704">
    <property type="entry name" value="MacB_PCD"/>
    <property type="match status" value="1"/>
</dbReference>
<dbReference type="SMART" id="SM00382">
    <property type="entry name" value="AAA"/>
    <property type="match status" value="1"/>
</dbReference>
<dbReference type="SUPFAM" id="SSF52540">
    <property type="entry name" value="P-loop containing nucleoside triphosphate hydrolases"/>
    <property type="match status" value="1"/>
</dbReference>
<dbReference type="PROSITE" id="PS00211">
    <property type="entry name" value="ABC_TRANSPORTER_1"/>
    <property type="match status" value="1"/>
</dbReference>
<dbReference type="PROSITE" id="PS50893">
    <property type="entry name" value="ABC_TRANSPORTER_2"/>
    <property type="match status" value="1"/>
</dbReference>
<dbReference type="PROSITE" id="PS51267">
    <property type="entry name" value="MACB"/>
    <property type="match status" value="1"/>
</dbReference>
<reference key="1">
    <citation type="journal article" date="2004" name="Proc. Natl. Acad. Sci. U.S.A.">
        <title>The louse-borne human pathogen Bartonella quintana is a genomic derivative of the zoonotic agent Bartonella henselae.</title>
        <authorList>
            <person name="Alsmark U.C.M."/>
            <person name="Frank A.C."/>
            <person name="Karlberg E.O."/>
            <person name="Legault B.-A."/>
            <person name="Ardell D.H."/>
            <person name="Canbaeck B."/>
            <person name="Eriksson A.-S."/>
            <person name="Naeslund A.K."/>
            <person name="Handley S.A."/>
            <person name="Huvet M."/>
            <person name="La Scola B."/>
            <person name="Holmberg M."/>
            <person name="Andersson S.G.E."/>
        </authorList>
    </citation>
    <scope>NUCLEOTIDE SEQUENCE [LARGE SCALE GENOMIC DNA]</scope>
    <source>
        <strain>Toulouse</strain>
    </source>
</reference>
<gene>
    <name evidence="1" type="primary">macB</name>
    <name type="ordered locus">BQ12380</name>
</gene>
<name>MACB_BARQU</name>
<accession>Q6FYL0</accession>
<keyword id="KW-0046">Antibiotic resistance</keyword>
<keyword id="KW-0067">ATP-binding</keyword>
<keyword id="KW-0997">Cell inner membrane</keyword>
<keyword id="KW-1003">Cell membrane</keyword>
<keyword id="KW-0472">Membrane</keyword>
<keyword id="KW-0547">Nucleotide-binding</keyword>
<keyword id="KW-1278">Translocase</keyword>
<keyword id="KW-0812">Transmembrane</keyword>
<keyword id="KW-1133">Transmembrane helix</keyword>
<keyword id="KW-0813">Transport</keyword>
<sequence>MRTEQADDVLVLENIVRKFSAGETFVTVLKDINLTIKRGEMVAIVGASGSGKSTLMNILGCLDRPSSGRYWISGKKTACLSADELSALRRNHFGFIFQRYHLLSELTALGNVEIPAIYAGCSPQIRKKRAQDLLIRLGMGDRINHRPNQLSGGQQQRVSIARALMNNAEVILADEPTGALDKKSGQEVLRILDELHQEGRTIVIVTHDMQVAERAERIIEISDGEIIADNVAKVAKTKAKGQALQGKQNPKNQKTLGFFRSFAERFREAFVMALLAMNAHRMRTFLTMLGVIIGIAAIIAMVALGTGTREKILENFKSLGSNTLTILPGKSLSDPQSDKITSLVEADAEALSRLPYVSGVTPQVSASSTVRFGAVEVDAVIVGVGEQFFQTQGLNAVQGRLFDQKSVRDRAVDLVIEKEALSVLFPHSRESPVGKVVQVGQVPARIVGVIDQQHNGGMSNTLQVYLPYTTVQTRFVGTTQVRAITVKIADDIDSHLAESMVRRFLIMRHGEEDFFIRNSQLFRDRIMESTHILTLLVSSIAAISLIVGGIGVMNIMLVTVSERINEIGVRMAVGARQSDILQQFLIEAILVCIIGGGVGILFGLSIGGLFVLFEAPIHLIYTIDSIIISLTFSTLIGICFGFSPARQASRLDPVVALSRD</sequence>
<feature type="chain" id="PRO_0000269922" description="Macrolide export ATP-binding/permease protein MacB">
    <location>
        <begin position="1"/>
        <end position="660"/>
    </location>
</feature>
<feature type="transmembrane region" description="Helical" evidence="1">
    <location>
        <begin position="285"/>
        <end position="305"/>
    </location>
</feature>
<feature type="transmembrane region" description="Helical" evidence="1">
    <location>
        <begin position="532"/>
        <end position="552"/>
    </location>
</feature>
<feature type="transmembrane region" description="Helical" evidence="1">
    <location>
        <begin position="593"/>
        <end position="613"/>
    </location>
</feature>
<feature type="transmembrane region" description="Helical" evidence="1">
    <location>
        <begin position="625"/>
        <end position="645"/>
    </location>
</feature>
<feature type="domain" description="ABC transporter" evidence="1">
    <location>
        <begin position="10"/>
        <end position="248"/>
    </location>
</feature>
<feature type="binding site" evidence="1">
    <location>
        <begin position="46"/>
        <end position="53"/>
    </location>
    <ligand>
        <name>ATP</name>
        <dbReference type="ChEBI" id="CHEBI:30616"/>
    </ligand>
</feature>
<comment type="function">
    <text evidence="1">Non-canonical ABC transporter that contains transmembrane domains (TMD), which form a pore in the inner membrane, and an ATP-binding domain (NBD), which is responsible for energy generation. Confers resistance against macrolides.</text>
</comment>
<comment type="subunit">
    <text evidence="1">Homodimer.</text>
</comment>
<comment type="subcellular location">
    <subcellularLocation>
        <location evidence="1">Cell inner membrane</location>
        <topology evidence="1">Multi-pass membrane protein</topology>
    </subcellularLocation>
</comment>
<comment type="similarity">
    <text evidence="1">Belongs to the ABC transporter superfamily. Macrolide exporter (TC 3.A.1.122) family.</text>
</comment>
<evidence type="ECO:0000255" key="1">
    <source>
        <dbReference type="HAMAP-Rule" id="MF_01720"/>
    </source>
</evidence>